<accession>Q8BGM5</accession>
<accession>Q6H1U9</accession>
<accession>Q8VCM0</accession>
<protein>
    <recommendedName>
        <fullName evidence="7">Bestrophin-2</fullName>
    </recommendedName>
    <alternativeName>
        <fullName>Vitelliform macular dystrophy 2-like protein 1</fullName>
    </alternativeName>
</protein>
<dbReference type="EMBL" id="AY450428">
    <property type="protein sequence ID" value="AAS09923.1"/>
    <property type="molecule type" value="mRNA"/>
</dbReference>
<dbReference type="EMBL" id="BC019528">
    <property type="protein sequence ID" value="AAH19528.1"/>
    <property type="status" value="ALT_INIT"/>
    <property type="molecule type" value="mRNA"/>
</dbReference>
<dbReference type="EMBL" id="BC031186">
    <property type="protein sequence ID" value="AAH31186.1"/>
    <property type="status" value="ALT_INIT"/>
    <property type="molecule type" value="mRNA"/>
</dbReference>
<dbReference type="EMBL" id="BC036157">
    <property type="protein sequence ID" value="AAH36157.2"/>
    <property type="status" value="ALT_INIT"/>
    <property type="molecule type" value="mRNA"/>
</dbReference>
<dbReference type="EMBL" id="BC036163">
    <property type="protein sequence ID" value="AAH36163.2"/>
    <property type="status" value="ALT_INIT"/>
    <property type="molecule type" value="mRNA"/>
</dbReference>
<dbReference type="CCDS" id="CCDS52621.1"/>
<dbReference type="RefSeq" id="NP_001123666.1">
    <property type="nucleotide sequence ID" value="NM_001130194.1"/>
</dbReference>
<dbReference type="RefSeq" id="XP_006530883.1">
    <property type="nucleotide sequence ID" value="XM_006530820.1"/>
</dbReference>
<dbReference type="SMR" id="Q8BGM5"/>
<dbReference type="FunCoup" id="Q8BGM5">
    <property type="interactions" value="32"/>
</dbReference>
<dbReference type="STRING" id="10090.ENSMUSP00000147837"/>
<dbReference type="GlyGen" id="Q8BGM5">
    <property type="glycosylation" value="1 site"/>
</dbReference>
<dbReference type="PhosphoSitePlus" id="Q8BGM5"/>
<dbReference type="jPOST" id="Q8BGM5"/>
<dbReference type="PaxDb" id="10090-ENSMUSP00000053408"/>
<dbReference type="ProteomicsDB" id="273556"/>
<dbReference type="DNASU" id="212989"/>
<dbReference type="GeneID" id="212989"/>
<dbReference type="KEGG" id="mmu:212989"/>
<dbReference type="UCSC" id="uc009mov.1">
    <property type="organism name" value="mouse"/>
</dbReference>
<dbReference type="AGR" id="MGI:2387588"/>
<dbReference type="CTD" id="54831"/>
<dbReference type="MGI" id="MGI:2387588">
    <property type="gene designation" value="Best2"/>
</dbReference>
<dbReference type="eggNOG" id="KOG3547">
    <property type="taxonomic scope" value="Eukaryota"/>
</dbReference>
<dbReference type="InParanoid" id="Q8BGM5"/>
<dbReference type="OrthoDB" id="201595at2759"/>
<dbReference type="PhylomeDB" id="Q8BGM5"/>
<dbReference type="TreeFam" id="TF315803"/>
<dbReference type="Reactome" id="R-MMU-2672351">
    <property type="pathway name" value="Stimuli-sensing channels"/>
</dbReference>
<dbReference type="BioGRID-ORCS" id="212989">
    <property type="hits" value="1 hit in 77 CRISPR screens"/>
</dbReference>
<dbReference type="ChiTaRS" id="Best2">
    <property type="organism name" value="mouse"/>
</dbReference>
<dbReference type="PRO" id="PR:Q8BGM5"/>
<dbReference type="Proteomes" id="UP000000589">
    <property type="component" value="Unplaced"/>
</dbReference>
<dbReference type="RNAct" id="Q8BGM5">
    <property type="molecule type" value="protein"/>
</dbReference>
<dbReference type="GO" id="GO:0016323">
    <property type="term" value="C:basolateral plasma membrane"/>
    <property type="evidence" value="ECO:0000314"/>
    <property type="project" value="UniProtKB"/>
</dbReference>
<dbReference type="GO" id="GO:0034707">
    <property type="term" value="C:chloride channel complex"/>
    <property type="evidence" value="ECO:0000314"/>
    <property type="project" value="BHF-UCL"/>
</dbReference>
<dbReference type="GO" id="GO:0005929">
    <property type="term" value="C:cilium"/>
    <property type="evidence" value="ECO:0000314"/>
    <property type="project" value="HGNC-UCL"/>
</dbReference>
<dbReference type="GO" id="GO:0005886">
    <property type="term" value="C:plasma membrane"/>
    <property type="evidence" value="ECO:0000250"/>
    <property type="project" value="UniProtKB"/>
</dbReference>
<dbReference type="GO" id="GO:0160133">
    <property type="term" value="F:bicarbonate channel activity"/>
    <property type="evidence" value="ECO:0000314"/>
    <property type="project" value="UniProtKB"/>
</dbReference>
<dbReference type="GO" id="GO:0005254">
    <property type="term" value="F:chloride channel activity"/>
    <property type="evidence" value="ECO:0000314"/>
    <property type="project" value="UniProtKB"/>
</dbReference>
<dbReference type="GO" id="GO:0005217">
    <property type="term" value="F:intracellularly ligand-gated monoatomic ion channel activity"/>
    <property type="evidence" value="ECO:0000250"/>
    <property type="project" value="UniProtKB"/>
</dbReference>
<dbReference type="GO" id="GO:0099095">
    <property type="term" value="F:ligand-gated monoatomic anion channel activity"/>
    <property type="evidence" value="ECO:0000250"/>
    <property type="project" value="UniProtKB"/>
</dbReference>
<dbReference type="GO" id="GO:0099094">
    <property type="term" value="F:ligand-gated monoatomic cation channel activity"/>
    <property type="evidence" value="ECO:0000250"/>
    <property type="project" value="UniProtKB"/>
</dbReference>
<dbReference type="GO" id="GO:0046872">
    <property type="term" value="F:metal ion binding"/>
    <property type="evidence" value="ECO:0007669"/>
    <property type="project" value="UniProtKB-KW"/>
</dbReference>
<dbReference type="GO" id="GO:0015701">
    <property type="term" value="P:bicarbonate transport"/>
    <property type="evidence" value="ECO:0000315"/>
    <property type="project" value="UniProtKB"/>
</dbReference>
<dbReference type="GO" id="GO:1902476">
    <property type="term" value="P:chloride transmembrane transport"/>
    <property type="evidence" value="ECO:0000315"/>
    <property type="project" value="BHF-UCL"/>
</dbReference>
<dbReference type="GO" id="GO:0006821">
    <property type="term" value="P:chloride transport"/>
    <property type="evidence" value="ECO:0000314"/>
    <property type="project" value="MGI"/>
</dbReference>
<dbReference type="GO" id="GO:0051899">
    <property type="term" value="P:membrane depolarization"/>
    <property type="evidence" value="ECO:0000314"/>
    <property type="project" value="HGNC-UCL"/>
</dbReference>
<dbReference type="GO" id="GO:0007608">
    <property type="term" value="P:sensory perception of smell"/>
    <property type="evidence" value="ECO:0000270"/>
    <property type="project" value="HGNC-UCL"/>
</dbReference>
<dbReference type="InterPro" id="IPR000615">
    <property type="entry name" value="Bestrophin"/>
</dbReference>
<dbReference type="InterPro" id="IPR021134">
    <property type="entry name" value="Bestrophin-like"/>
</dbReference>
<dbReference type="PANTHER" id="PTHR10736">
    <property type="entry name" value="BESTROPHIN"/>
    <property type="match status" value="1"/>
</dbReference>
<dbReference type="PANTHER" id="PTHR10736:SF1">
    <property type="entry name" value="BESTROPHIN-2"/>
    <property type="match status" value="1"/>
</dbReference>
<dbReference type="Pfam" id="PF01062">
    <property type="entry name" value="Bestrophin"/>
    <property type="match status" value="1"/>
</dbReference>
<reference key="1">
    <citation type="journal article" date="2004" name="Cytogenet. Genome Res.">
        <title>Cloning and characterization of the murine Vmd2 RFP-TM gene family.</title>
        <authorList>
            <person name="Kraemer F."/>
            <person name="Stoehr H."/>
            <person name="Weber B.H.F."/>
        </authorList>
    </citation>
    <scope>NUCLEOTIDE SEQUENCE [MRNA]</scope>
    <source>
        <strain>C57BL/6J</strain>
        <tissue>Colon</tissue>
    </source>
</reference>
<reference key="2">
    <citation type="journal article" date="2004" name="Genome Res.">
        <title>The status, quality, and expansion of the NIH full-length cDNA project: the Mammalian Gene Collection (MGC).</title>
        <authorList>
            <consortium name="The MGC Project Team"/>
        </authorList>
    </citation>
    <scope>NUCLEOTIDE SEQUENCE [LARGE SCALE MRNA]</scope>
    <source>
        <strain>FVB/N</strain>
        <tissue>Colon</tissue>
    </source>
</reference>
<reference key="3">
    <citation type="journal article" date="2008" name="Am. J. Physiol.">
        <title>Bestrophin Cl- channels are highly permeable to HCO3-.</title>
        <authorList>
            <person name="Qu Z."/>
            <person name="Hartzell H.C."/>
        </authorList>
    </citation>
    <scope>FUNCTION</scope>
    <scope>TRANSPORTER ACTIVITY</scope>
</reference>
<reference key="4">
    <citation type="journal article" date="2010" name="J. Clin. Invest.">
        <title>Bestrophin-2 mediates bicarbonate transport by goblet cells in mouse colon.</title>
        <authorList>
            <person name="Yu K."/>
            <person name="Lujan R."/>
            <person name="Marmorstein A."/>
            <person name="Gabriel S."/>
            <person name="Hartzell H.C."/>
        </authorList>
    </citation>
    <scope>FUNCTION</scope>
    <scope>TRANSPORTER ACTIVITY</scope>
    <scope>SUBCELLULAR LOCATION</scope>
    <scope>TISSUE SPECIFICITY</scope>
</reference>
<sequence length="508" mass="57023">MTVTYTARVANARFGGFSQLLLLWRGSIYKLLWRELLCFLGLYMALSAAYRFLLAEEQKRYFEKLVIYCDQYASLIPVSFVLGFYVTLVVHRWWNQYLCMPLPDALMCIVAGTVHGRDDRGRLYRRTLMRYAGLSAVLILRSVSTAVFKRFPTIDHVVEAGFMTREERKKFENLNSSYNKYWVPCVWFSSLAAQARREGRIRDNSALKLLLEELNVFRSKCGMLFHYDWISIPLVYTQVVTIAVYSYFLACLIGRQFLDPAQGYKDHTLDLCVPIFTLLQFFFYAGWLKVAEQLINPFGEDDDDFETNFLIDRNFQVSMLAVDEMYDDLAMLEKDLYWDAAEARAPYTAATAFLLQQPSFQGSTFDIALAKEDMQFQRLDGVDGPLGEVHGDFLQRLLPAGAGSVGPLGRRLSLLRRKNSCVSEASTAASCGCAGAADGGGVECGCGDPLLDPSLREPELEPPACPEPPAPIPGPTPEPFTTVSIPGPRAPAPPWLPSPIGEEEESPA</sequence>
<gene>
    <name evidence="8" type="primary">Best2</name>
    <name evidence="6" type="synonym">Vmd2l1</name>
</gene>
<proteinExistence type="evidence at transcript level"/>
<evidence type="ECO:0000250" key="1">
    <source>
        <dbReference type="UniProtKB" id="E1BF86"/>
    </source>
</evidence>
<evidence type="ECO:0000250" key="2">
    <source>
        <dbReference type="UniProtKB" id="Q8NFU1"/>
    </source>
</evidence>
<evidence type="ECO:0000256" key="3">
    <source>
        <dbReference type="SAM" id="MobiDB-lite"/>
    </source>
</evidence>
<evidence type="ECO:0000269" key="4">
    <source>
    </source>
</evidence>
<evidence type="ECO:0000269" key="5">
    <source>
    </source>
</evidence>
<evidence type="ECO:0000303" key="6">
    <source>
    </source>
</evidence>
<evidence type="ECO:0000305" key="7"/>
<evidence type="ECO:0000312" key="8">
    <source>
        <dbReference type="EMBL" id="AAS09923.1"/>
    </source>
</evidence>
<keyword id="KW-0106">Calcium</keyword>
<keyword id="KW-1003">Cell membrane</keyword>
<keyword id="KW-0868">Chloride</keyword>
<keyword id="KW-0869">Chloride channel</keyword>
<keyword id="KW-0407">Ion channel</keyword>
<keyword id="KW-0406">Ion transport</keyword>
<keyword id="KW-0472">Membrane</keyword>
<keyword id="KW-0479">Metal-binding</keyword>
<keyword id="KW-1185">Reference proteome</keyword>
<keyword id="KW-0812">Transmembrane</keyword>
<keyword id="KW-1133">Transmembrane helix</keyword>
<keyword id="KW-0813">Transport</keyword>
<feature type="chain" id="PRO_0000143119" description="Bestrophin-2">
    <location>
        <begin position="1"/>
        <end position="508"/>
    </location>
</feature>
<feature type="topological domain" description="Cytoplasmic" evidence="2">
    <location>
        <begin position="1"/>
        <end position="31"/>
    </location>
</feature>
<feature type="transmembrane region" description="Helical" evidence="2">
    <location>
        <begin position="32"/>
        <end position="51"/>
    </location>
</feature>
<feature type="topological domain" description="Extracellular" evidence="2">
    <location>
        <begin position="52"/>
        <end position="60"/>
    </location>
</feature>
<feature type="transmembrane region" description="Helical" evidence="2">
    <location>
        <begin position="61"/>
        <end position="82"/>
    </location>
</feature>
<feature type="topological domain" description="Cytoplasmic" evidence="2">
    <location>
        <begin position="83"/>
        <end position="238"/>
    </location>
</feature>
<feature type="transmembrane region" description="Helical" evidence="2">
    <location>
        <begin position="239"/>
        <end position="255"/>
    </location>
</feature>
<feature type="topological domain" description="Extracellular" evidence="2">
    <location>
        <begin position="256"/>
        <end position="274"/>
    </location>
</feature>
<feature type="transmembrane region" description="Helical" evidence="2">
    <location>
        <begin position="275"/>
        <end position="288"/>
    </location>
</feature>
<feature type="topological domain" description="Cytoplasmic" evidence="2">
    <location>
        <begin position="289"/>
        <end position="508"/>
    </location>
</feature>
<feature type="region of interest" description="Disordered" evidence="3">
    <location>
        <begin position="455"/>
        <end position="508"/>
    </location>
</feature>
<feature type="compositionally biased region" description="Pro residues" evidence="3">
    <location>
        <begin position="461"/>
        <end position="478"/>
    </location>
</feature>
<feature type="compositionally biased region" description="Pro residues" evidence="3">
    <location>
        <begin position="488"/>
        <end position="497"/>
    </location>
</feature>
<feature type="binding site" description="in other chain" evidence="2">
    <location>
        <position position="10"/>
    </location>
    <ligand>
        <name>Ca(2+)</name>
        <dbReference type="ChEBI" id="CHEBI:29108"/>
        <note>ligand shared between two neighboring subunits</note>
    </ligand>
</feature>
<feature type="binding site" evidence="2">
    <location>
        <position position="293"/>
    </location>
    <ligand>
        <name>Ca(2+)</name>
        <dbReference type="ChEBI" id="CHEBI:29108"/>
        <note>ligand shared between two neighboring subunits</note>
    </ligand>
</feature>
<feature type="binding site" evidence="2">
    <location>
        <position position="296"/>
    </location>
    <ligand>
        <name>Ca(2+)</name>
        <dbReference type="ChEBI" id="CHEBI:29108"/>
        <note>ligand shared between two neighboring subunits</note>
    </ligand>
</feature>
<feature type="binding site" evidence="2">
    <location>
        <position position="301"/>
    </location>
    <ligand>
        <name>Ca(2+)</name>
        <dbReference type="ChEBI" id="CHEBI:29108"/>
        <note>ligand shared between two neighboring subunits</note>
    </ligand>
</feature>
<feature type="binding site" evidence="2">
    <location>
        <position position="304"/>
    </location>
    <ligand>
        <name>Ca(2+)</name>
        <dbReference type="ChEBI" id="CHEBI:29108"/>
        <note>ligand shared between two neighboring subunits</note>
    </ligand>
</feature>
<feature type="sequence conflict" description="In Ref. 1; AAS09923." evidence="7" ref="1">
    <original>P</original>
    <variation>S</variation>
    <location>
        <position position="462"/>
    </location>
</feature>
<name>BEST2_MOUSE</name>
<organism>
    <name type="scientific">Mus musculus</name>
    <name type="common">Mouse</name>
    <dbReference type="NCBI Taxonomy" id="10090"/>
    <lineage>
        <taxon>Eukaryota</taxon>
        <taxon>Metazoa</taxon>
        <taxon>Chordata</taxon>
        <taxon>Craniata</taxon>
        <taxon>Vertebrata</taxon>
        <taxon>Euteleostomi</taxon>
        <taxon>Mammalia</taxon>
        <taxon>Eutheria</taxon>
        <taxon>Euarchontoglires</taxon>
        <taxon>Glires</taxon>
        <taxon>Rodentia</taxon>
        <taxon>Myomorpha</taxon>
        <taxon>Muroidea</taxon>
        <taxon>Muridae</taxon>
        <taxon>Murinae</taxon>
        <taxon>Mus</taxon>
        <taxon>Mus</taxon>
    </lineage>
</organism>
<comment type="function">
    <text evidence="1 2 4 5">Ligand-gated anion channel that allows the movement of anions across cell membranes when activated by calcium (Ca2+) (PubMed:18400985, PubMed:20407206). Transports a large specter of anions, namely mediates the movement of chloride, L-glutamate and iodide (PubMed:18400985, PubMed:20407206). Calcium-binding triggers the dilation of the aperture, but calcium-dependent gating is only effective when the size of the passing anion is bigger than the closed aperture (By similarity). Mediates the calcium-activated hydrogencarbonate movement and participates in colonic hydrogencarbonate secretion concomitant with mucin secretion (PubMed:20407206). In non-pigmented epithelium (NPE), mediates the efflux of intracellular L-glutamate; binding of intracellular L-glutamate activates and open both the neck and the aperture of the channel, leading to L-glutamate exit promoting chloride influx movement from the extracellular side in trans (By similarity). Also exhibits a directional permeability for intracellular glutamine, in a similar manner as for L-glutamate (By similarity).</text>
</comment>
<comment type="catalytic activity">
    <reaction evidence="4">
        <text>chloride(in) = chloride(out)</text>
        <dbReference type="Rhea" id="RHEA:29823"/>
        <dbReference type="ChEBI" id="CHEBI:17996"/>
    </reaction>
</comment>
<comment type="catalytic activity">
    <reaction evidence="4 5">
        <text>hydrogencarbonate(in) = hydrogencarbonate(out)</text>
        <dbReference type="Rhea" id="RHEA:28695"/>
        <dbReference type="ChEBI" id="CHEBI:17544"/>
    </reaction>
</comment>
<comment type="catalytic activity">
    <reaction evidence="2">
        <text>L-glutamate(out) = L-glutamate(in)</text>
        <dbReference type="Rhea" id="RHEA:66336"/>
        <dbReference type="ChEBI" id="CHEBI:29985"/>
    </reaction>
</comment>
<comment type="catalytic activity">
    <reaction evidence="1">
        <text>iodide(out) = iodide(in)</text>
        <dbReference type="Rhea" id="RHEA:66324"/>
        <dbReference type="ChEBI" id="CHEBI:16382"/>
    </reaction>
</comment>
<comment type="catalytic activity">
    <reaction evidence="2">
        <text>L-glutamine(out) = L-glutamine(in)</text>
        <dbReference type="Rhea" id="RHEA:73419"/>
        <dbReference type="ChEBI" id="CHEBI:58359"/>
    </reaction>
</comment>
<comment type="activity regulation">
    <text evidence="2">Chloride channel activity is allosterically inhibited by GLUL/glutamine synthase (GS) which affects the gating at the aperture in the absence of intracellular glutamate. Inhibitory effect of GLUL is relieved upon increasing of intracellular level of L-glutamate.</text>
</comment>
<comment type="subunit">
    <text evidence="2">Pentamer. Interacts with GLUL; this interaction tethers a fraction of GLUL to the membrane, causing a decrease of cytosolic glutamine synthase (GS) activity and inhibits the chloride channel activity of BEST2 by affecting the gating at the aperture in the absence of intracellular glutamate.</text>
</comment>
<comment type="subcellular location">
    <subcellularLocation>
        <location evidence="1">Cell membrane</location>
        <topology evidence="2">Multi-pass membrane protein</topology>
    </subcellularLocation>
    <subcellularLocation>
        <location evidence="5">Basolateral cell membrane</location>
        <topology evidence="2">Multi-pass membrane protein</topology>
    </subcellularLocation>
</comment>
<comment type="tissue specificity">
    <text evidence="5">Expressed in mucin-secreting colonic goblet cells.</text>
</comment>
<comment type="domain">
    <text evidence="2">The C-terminal auto-inhibitory segment (AS) modulates the open/closed conformation of the channel and determines paralog specificity among bestrophins. In a closed conformation, the C-terminal auto-inhibitory segment constricts the channel concentrically by wrapping around the channel periphery in an inter-protomer manner.</text>
</comment>
<comment type="similarity">
    <text evidence="7">Belongs to the anion channel-forming bestrophin (TC 1.A.46) family. Calcium-sensitive chloride channel subfamily.</text>
</comment>
<comment type="sequence caution" evidence="7">
    <conflict type="erroneous initiation">
        <sequence resource="EMBL-CDS" id="AAH19528"/>
    </conflict>
    <text>Truncated N-terminus.</text>
</comment>
<comment type="sequence caution" evidence="7">
    <conflict type="erroneous initiation">
        <sequence resource="EMBL-CDS" id="AAH31186"/>
    </conflict>
    <text>Truncated N-terminus.</text>
</comment>
<comment type="sequence caution" evidence="7">
    <conflict type="erroneous initiation">
        <sequence resource="EMBL-CDS" id="AAH36157"/>
    </conflict>
    <text>Truncated N-terminus.</text>
</comment>
<comment type="sequence caution" evidence="7">
    <conflict type="erroneous initiation">
        <sequence resource="EMBL-CDS" id="AAH36163"/>
    </conflict>
    <text>Truncated N-terminus.</text>
</comment>